<dbReference type="EMBL" id="AL845470">
    <property type="protein sequence ID" value="CAM17417.1"/>
    <property type="molecule type" value="Genomic_DNA"/>
</dbReference>
<dbReference type="CCDS" id="CCDS38201.1"/>
<dbReference type="RefSeq" id="NP_001075440.1">
    <property type="nucleotide sequence ID" value="NM_001081971.1"/>
</dbReference>
<dbReference type="SMR" id="A2ARS0"/>
<dbReference type="STRING" id="10090.ENSMUSP00000100542"/>
<dbReference type="GlyGen" id="A2ARS0">
    <property type="glycosylation" value="1 site, 1 O-linked glycan (1 site)"/>
</dbReference>
<dbReference type="iPTMnet" id="A2ARS0"/>
<dbReference type="PhosphoSitePlus" id="A2ARS0"/>
<dbReference type="PaxDb" id="10090-ENSMUSP00000100542"/>
<dbReference type="ProteomicsDB" id="282123"/>
<dbReference type="Antibodypedia" id="70339">
    <property type="antibodies" value="52 antibodies from 9 providers"/>
</dbReference>
<dbReference type="DNASU" id="383787"/>
<dbReference type="Ensembl" id="ENSMUST00000104937.2">
    <property type="protein sequence ID" value="ENSMUSP00000100542.2"/>
    <property type="gene ID" value="ENSMUSG00000078137.2"/>
</dbReference>
<dbReference type="GeneID" id="383787"/>
<dbReference type="KEGG" id="mmu:383787"/>
<dbReference type="UCSC" id="uc008lsh.1">
    <property type="organism name" value="mouse"/>
</dbReference>
<dbReference type="AGR" id="MGI:2686183"/>
<dbReference type="CTD" id="100131244"/>
<dbReference type="MGI" id="MGI:2686183">
    <property type="gene designation" value="Ankrd63"/>
</dbReference>
<dbReference type="VEuPathDB" id="HostDB:ENSMUSG00000078137"/>
<dbReference type="eggNOG" id="KOG0504">
    <property type="taxonomic scope" value="Eukaryota"/>
</dbReference>
<dbReference type="GeneTree" id="ENSGT00940000163025"/>
<dbReference type="HOGENOM" id="CLU_042924_0_0_1"/>
<dbReference type="InParanoid" id="A2ARS0"/>
<dbReference type="OMA" id="QPWQAGT"/>
<dbReference type="OrthoDB" id="5406014at2759"/>
<dbReference type="PhylomeDB" id="A2ARS0"/>
<dbReference type="TreeFam" id="TF333311"/>
<dbReference type="BioGRID-ORCS" id="383787">
    <property type="hits" value="1 hit in 76 CRISPR screens"/>
</dbReference>
<dbReference type="CD-CODE" id="CE726F99">
    <property type="entry name" value="Postsynaptic density"/>
</dbReference>
<dbReference type="PRO" id="PR:A2ARS0"/>
<dbReference type="Proteomes" id="UP000000589">
    <property type="component" value="Chromosome 2"/>
</dbReference>
<dbReference type="RNAct" id="A2ARS0">
    <property type="molecule type" value="protein"/>
</dbReference>
<dbReference type="Bgee" id="ENSMUSG00000078137">
    <property type="expression patterns" value="Expressed in olfactory tubercle and 47 other cell types or tissues"/>
</dbReference>
<dbReference type="Gene3D" id="1.25.40.20">
    <property type="entry name" value="Ankyrin repeat-containing domain"/>
    <property type="match status" value="1"/>
</dbReference>
<dbReference type="InterPro" id="IPR050776">
    <property type="entry name" value="Ank_Repeat/CDKN_Inhibitor"/>
</dbReference>
<dbReference type="InterPro" id="IPR002110">
    <property type="entry name" value="Ankyrin_rpt"/>
</dbReference>
<dbReference type="InterPro" id="IPR036770">
    <property type="entry name" value="Ankyrin_rpt-contain_sf"/>
</dbReference>
<dbReference type="PANTHER" id="PTHR24201">
    <property type="entry name" value="ANK_REP_REGION DOMAIN-CONTAINING PROTEIN"/>
    <property type="match status" value="1"/>
</dbReference>
<dbReference type="PANTHER" id="PTHR24201:SF8">
    <property type="entry name" value="CYCLIN-DEPENDENT KINASE 4 INHIBITOR B"/>
    <property type="match status" value="1"/>
</dbReference>
<dbReference type="Pfam" id="PF12796">
    <property type="entry name" value="Ank_2"/>
    <property type="match status" value="1"/>
</dbReference>
<dbReference type="SMART" id="SM00248">
    <property type="entry name" value="ANK"/>
    <property type="match status" value="3"/>
</dbReference>
<dbReference type="SUPFAM" id="SSF48403">
    <property type="entry name" value="Ankyrin repeat"/>
    <property type="match status" value="1"/>
</dbReference>
<dbReference type="PROSITE" id="PS50297">
    <property type="entry name" value="ANK_REP_REGION"/>
    <property type="match status" value="1"/>
</dbReference>
<dbReference type="PROSITE" id="PS50088">
    <property type="entry name" value="ANK_REPEAT"/>
    <property type="match status" value="2"/>
</dbReference>
<evidence type="ECO:0000250" key="1">
    <source>
        <dbReference type="UniProtKB" id="C9JTQ0"/>
    </source>
</evidence>
<evidence type="ECO:0000255" key="2"/>
<evidence type="ECO:0000256" key="3">
    <source>
        <dbReference type="SAM" id="MobiDB-lite"/>
    </source>
</evidence>
<evidence type="ECO:0000312" key="4">
    <source>
        <dbReference type="EMBL" id="CAM17417.1"/>
    </source>
</evidence>
<evidence type="ECO:0000312" key="5">
    <source>
        <dbReference type="MGI" id="MGI:2686183"/>
    </source>
</evidence>
<evidence type="ECO:0007744" key="6">
    <source>
    </source>
</evidence>
<keyword id="KW-0040">ANK repeat</keyword>
<keyword id="KW-0597">Phosphoprotein</keyword>
<keyword id="KW-1185">Reference proteome</keyword>
<keyword id="KW-0677">Repeat</keyword>
<proteinExistence type="evidence at protein level"/>
<feature type="chain" id="PRO_0000411003" description="Ankyrin repeat domain-containing protein 63">
    <location>
        <begin position="1"/>
        <end position="390"/>
    </location>
</feature>
<feature type="repeat" description="ANK 1" evidence="2">
    <location>
        <begin position="11"/>
        <end position="40"/>
    </location>
</feature>
<feature type="repeat" description="ANK 2" evidence="2">
    <location>
        <begin position="46"/>
        <end position="79"/>
    </location>
</feature>
<feature type="repeat" description="ANK 3" evidence="2">
    <location>
        <begin position="83"/>
        <end position="112"/>
    </location>
</feature>
<feature type="repeat" description="ANK 4" evidence="2">
    <location>
        <begin position="116"/>
        <end position="145"/>
    </location>
</feature>
<feature type="repeat" description="ANK 5" evidence="2">
    <location>
        <begin position="153"/>
        <end position="182"/>
    </location>
</feature>
<feature type="region of interest" description="Disordered" evidence="3">
    <location>
        <begin position="181"/>
        <end position="213"/>
    </location>
</feature>
<feature type="region of interest" description="Disordered" evidence="3">
    <location>
        <begin position="226"/>
        <end position="245"/>
    </location>
</feature>
<feature type="region of interest" description="Disordered" evidence="3">
    <location>
        <begin position="320"/>
        <end position="377"/>
    </location>
</feature>
<feature type="modified residue" description="Phosphoserine" evidence="6">
    <location>
        <position position="193"/>
    </location>
</feature>
<feature type="modified residue" description="Phosphoserine" evidence="6">
    <location>
        <position position="304"/>
    </location>
</feature>
<gene>
    <name evidence="1" type="primary">Ankrd63</name>
    <name evidence="5" type="synonym">Gm1337</name>
</gene>
<name>ANR63_MOUSE</name>
<accession>A2ARS0</accession>
<sequence length="390" mass="41068">MLKPKDLCPRAGTRTFLEAMQAGKVHLARFVLDALDRSIIDCRAEQGRTPLMVAVGLPDPAMRSRFVRLLLEQGAAVNLRDERGRTALSLACERGHLDAVQLLVQFSGDPEATDSAGNSPVMWAAACGHGAVLEFLVRSFRRLGLRLDRTNRAGLTALQLAASRGHGTCVQALTGPWGRAAAAAAARGSNSDSPPGHPAPAPSPERRRPSPRRLPRPLLARFARAAGGHGHGHGHGHGHGGELASAGKGSVRYRAQGNERPELGRSMSLALGTMTEEETARLRAGALMARPNSPQSSGSGRWRSQEVLEGAPLALMQAPVGLSPHPEGCPGSGRLGLRRRSTAPDIPSLVGEASGPESGPELENNALPFSVPGPKPWQAGTEAVVLQAQR</sequence>
<protein>
    <recommendedName>
        <fullName evidence="1">Ankyrin repeat domain-containing protein 63</fullName>
    </recommendedName>
</protein>
<reference evidence="4" key="1">
    <citation type="journal article" date="2009" name="PLoS Biol.">
        <title>Lineage-specific biology revealed by a finished genome assembly of the mouse.</title>
        <authorList>
            <person name="Church D.M."/>
            <person name="Goodstadt L."/>
            <person name="Hillier L.W."/>
            <person name="Zody M.C."/>
            <person name="Goldstein S."/>
            <person name="She X."/>
            <person name="Bult C.J."/>
            <person name="Agarwala R."/>
            <person name="Cherry J.L."/>
            <person name="DiCuccio M."/>
            <person name="Hlavina W."/>
            <person name="Kapustin Y."/>
            <person name="Meric P."/>
            <person name="Maglott D."/>
            <person name="Birtle Z."/>
            <person name="Marques A.C."/>
            <person name="Graves T."/>
            <person name="Zhou S."/>
            <person name="Teague B."/>
            <person name="Potamousis K."/>
            <person name="Churas C."/>
            <person name="Place M."/>
            <person name="Herschleb J."/>
            <person name="Runnheim R."/>
            <person name="Forrest D."/>
            <person name="Amos-Landgraf J."/>
            <person name="Schwartz D.C."/>
            <person name="Cheng Z."/>
            <person name="Lindblad-Toh K."/>
            <person name="Eichler E.E."/>
            <person name="Ponting C.P."/>
        </authorList>
    </citation>
    <scope>NUCLEOTIDE SEQUENCE [LARGE SCALE GENOMIC DNA]</scope>
    <source>
        <strain>C57BL/6J</strain>
    </source>
</reference>
<reference key="2">
    <citation type="journal article" date="2010" name="Cell">
        <title>A tissue-specific atlas of mouse protein phosphorylation and expression.</title>
        <authorList>
            <person name="Huttlin E.L."/>
            <person name="Jedrychowski M.P."/>
            <person name="Elias J.E."/>
            <person name="Goswami T."/>
            <person name="Rad R."/>
            <person name="Beausoleil S.A."/>
            <person name="Villen J."/>
            <person name="Haas W."/>
            <person name="Sowa M.E."/>
            <person name="Gygi S.P."/>
        </authorList>
    </citation>
    <scope>PHOSPHORYLATION [LARGE SCALE ANALYSIS] AT SER-193 AND SER-304</scope>
    <scope>IDENTIFICATION BY MASS SPECTROMETRY [LARGE SCALE ANALYSIS]</scope>
    <source>
        <tissue>Brain</tissue>
    </source>
</reference>
<organism>
    <name type="scientific">Mus musculus</name>
    <name type="common">Mouse</name>
    <dbReference type="NCBI Taxonomy" id="10090"/>
    <lineage>
        <taxon>Eukaryota</taxon>
        <taxon>Metazoa</taxon>
        <taxon>Chordata</taxon>
        <taxon>Craniata</taxon>
        <taxon>Vertebrata</taxon>
        <taxon>Euteleostomi</taxon>
        <taxon>Mammalia</taxon>
        <taxon>Eutheria</taxon>
        <taxon>Euarchontoglires</taxon>
        <taxon>Glires</taxon>
        <taxon>Rodentia</taxon>
        <taxon>Myomorpha</taxon>
        <taxon>Muroidea</taxon>
        <taxon>Muridae</taxon>
        <taxon>Murinae</taxon>
        <taxon>Mus</taxon>
        <taxon>Mus</taxon>
    </lineage>
</organism>